<feature type="chain" id="PRO_0000070585" description="HTH-type transcriptional regulator BetI">
    <location>
        <begin position="1"/>
        <end position="197"/>
    </location>
</feature>
<feature type="domain" description="HTH tetR-type" evidence="2">
    <location>
        <begin position="8"/>
        <end position="68"/>
    </location>
</feature>
<feature type="DNA-binding region" description="H-T-H motif" evidence="2">
    <location>
        <begin position="31"/>
        <end position="50"/>
    </location>
</feature>
<organism>
    <name type="scientific">Pseudomonas syringae pv. tomato (strain ATCC BAA-871 / DC3000)</name>
    <dbReference type="NCBI Taxonomy" id="223283"/>
    <lineage>
        <taxon>Bacteria</taxon>
        <taxon>Pseudomonadati</taxon>
        <taxon>Pseudomonadota</taxon>
        <taxon>Gammaproteobacteria</taxon>
        <taxon>Pseudomonadales</taxon>
        <taxon>Pseudomonadaceae</taxon>
        <taxon>Pseudomonas</taxon>
    </lineage>
</organism>
<proteinExistence type="inferred from homology"/>
<gene>
    <name evidence="2" type="primary">betI</name>
    <name type="ordered locus">PSPTO_0440</name>
</gene>
<evidence type="ECO:0000250" key="1"/>
<evidence type="ECO:0000255" key="2">
    <source>
        <dbReference type="HAMAP-Rule" id="MF_00768"/>
    </source>
</evidence>
<accession>Q88AF0</accession>
<protein>
    <recommendedName>
        <fullName evidence="2">HTH-type transcriptional regulator BetI</fullName>
    </recommendedName>
</protein>
<keyword id="KW-0238">DNA-binding</keyword>
<keyword id="KW-1185">Reference proteome</keyword>
<keyword id="KW-0678">Repressor</keyword>
<keyword id="KW-0804">Transcription</keyword>
<keyword id="KW-0805">Transcription regulation</keyword>
<sequence>MPKVGMQPIRRQQLIQATLTAVDQVGMGDASIALIARLAGVSNGIISHYFQDKNGLIAATMRHLMNALIQNVRERRQALTEDSPRAHLQVIIEGNFDASQVSGPAMKTWLAFWATSMHHPSLHRLQRINDHRLYSNLCCQFRRTLPLEQARNAARGLAALIDGLWLRGALSGDAFDTEQAQRIAYEYMDFQLAKSAS</sequence>
<reference key="1">
    <citation type="journal article" date="2003" name="Proc. Natl. Acad. Sci. U.S.A.">
        <title>The complete genome sequence of the Arabidopsis and tomato pathogen Pseudomonas syringae pv. tomato DC3000.</title>
        <authorList>
            <person name="Buell C.R."/>
            <person name="Joardar V."/>
            <person name="Lindeberg M."/>
            <person name="Selengut J."/>
            <person name="Paulsen I.T."/>
            <person name="Gwinn M.L."/>
            <person name="Dodson R.J."/>
            <person name="DeBoy R.T."/>
            <person name="Durkin A.S."/>
            <person name="Kolonay J.F."/>
            <person name="Madupu R."/>
            <person name="Daugherty S.C."/>
            <person name="Brinkac L.M."/>
            <person name="Beanan M.J."/>
            <person name="Haft D.H."/>
            <person name="Nelson W.C."/>
            <person name="Davidsen T.M."/>
            <person name="Zafar N."/>
            <person name="Zhou L."/>
            <person name="Liu J."/>
            <person name="Yuan Q."/>
            <person name="Khouri H.M."/>
            <person name="Fedorova N.B."/>
            <person name="Tran B."/>
            <person name="Russell D."/>
            <person name="Berry K.J."/>
            <person name="Utterback T.R."/>
            <person name="Van Aken S.E."/>
            <person name="Feldblyum T.V."/>
            <person name="D'Ascenzo M."/>
            <person name="Deng W.-L."/>
            <person name="Ramos A.R."/>
            <person name="Alfano J.R."/>
            <person name="Cartinhour S."/>
            <person name="Chatterjee A.K."/>
            <person name="Delaney T.P."/>
            <person name="Lazarowitz S.G."/>
            <person name="Martin G.B."/>
            <person name="Schneider D.J."/>
            <person name="Tang X."/>
            <person name="Bender C.L."/>
            <person name="White O."/>
            <person name="Fraser C.M."/>
            <person name="Collmer A."/>
        </authorList>
    </citation>
    <scope>NUCLEOTIDE SEQUENCE [LARGE SCALE GENOMIC DNA]</scope>
    <source>
        <strain>ATCC BAA-871 / DC3000</strain>
    </source>
</reference>
<comment type="function">
    <text evidence="1">Repressor involved in the biosynthesis of the osmoprotectant glycine betaine. It represses transcription of the choline transporter BetT and the genes of BetAB involved in the synthesis of glycine betaine (By similarity).</text>
</comment>
<comment type="pathway">
    <text>Amine and polyamine biosynthesis; betaine biosynthesis via choline pathway [regulation].</text>
</comment>
<dbReference type="EMBL" id="AE016853">
    <property type="protein sequence ID" value="AAO53984.1"/>
    <property type="molecule type" value="Genomic_DNA"/>
</dbReference>
<dbReference type="RefSeq" id="NP_790289.1">
    <property type="nucleotide sequence ID" value="NC_004578.1"/>
</dbReference>
<dbReference type="RefSeq" id="WP_005737465.1">
    <property type="nucleotide sequence ID" value="NC_004578.1"/>
</dbReference>
<dbReference type="SMR" id="Q88AF0"/>
<dbReference type="STRING" id="223283.PSPTO_0440"/>
<dbReference type="GeneID" id="1182049"/>
<dbReference type="KEGG" id="pst:PSPTO_0440"/>
<dbReference type="PATRIC" id="fig|223283.9.peg.460"/>
<dbReference type="eggNOG" id="COG1309">
    <property type="taxonomic scope" value="Bacteria"/>
</dbReference>
<dbReference type="HOGENOM" id="CLU_069356_15_4_6"/>
<dbReference type="OrthoDB" id="7618612at2"/>
<dbReference type="PhylomeDB" id="Q88AF0"/>
<dbReference type="UniPathway" id="UPA00529"/>
<dbReference type="Proteomes" id="UP000002515">
    <property type="component" value="Chromosome"/>
</dbReference>
<dbReference type="GO" id="GO:0003700">
    <property type="term" value="F:DNA-binding transcription factor activity"/>
    <property type="evidence" value="ECO:0007669"/>
    <property type="project" value="UniProtKB-UniRule"/>
</dbReference>
<dbReference type="GO" id="GO:0000976">
    <property type="term" value="F:transcription cis-regulatory region binding"/>
    <property type="evidence" value="ECO:0007669"/>
    <property type="project" value="TreeGrafter"/>
</dbReference>
<dbReference type="GO" id="GO:0019285">
    <property type="term" value="P:glycine betaine biosynthetic process from choline"/>
    <property type="evidence" value="ECO:0007669"/>
    <property type="project" value="UniProtKB-UniRule"/>
</dbReference>
<dbReference type="GO" id="GO:0045892">
    <property type="term" value="P:negative regulation of DNA-templated transcription"/>
    <property type="evidence" value="ECO:0007669"/>
    <property type="project" value="UniProtKB-UniRule"/>
</dbReference>
<dbReference type="Gene3D" id="1.10.357.10">
    <property type="entry name" value="Tetracycline Repressor, domain 2"/>
    <property type="match status" value="1"/>
</dbReference>
<dbReference type="HAMAP" id="MF_00768">
    <property type="entry name" value="HTH_type_BetI"/>
    <property type="match status" value="1"/>
</dbReference>
<dbReference type="InterPro" id="IPR039538">
    <property type="entry name" value="BetI_C"/>
</dbReference>
<dbReference type="InterPro" id="IPR023772">
    <property type="entry name" value="DNA-bd_HTH_TetR-type_CS"/>
</dbReference>
<dbReference type="InterPro" id="IPR009057">
    <property type="entry name" value="Homeodomain-like_sf"/>
</dbReference>
<dbReference type="InterPro" id="IPR050109">
    <property type="entry name" value="HTH-type_TetR-like_transc_reg"/>
</dbReference>
<dbReference type="InterPro" id="IPR001647">
    <property type="entry name" value="HTH_TetR"/>
</dbReference>
<dbReference type="InterPro" id="IPR036271">
    <property type="entry name" value="Tet_transcr_reg_TetR-rel_C_sf"/>
</dbReference>
<dbReference type="InterPro" id="IPR017757">
    <property type="entry name" value="Tscrpt_rep_BetI"/>
</dbReference>
<dbReference type="NCBIfam" id="TIGR03384">
    <property type="entry name" value="betaine_BetI"/>
    <property type="match status" value="1"/>
</dbReference>
<dbReference type="NCBIfam" id="NF001978">
    <property type="entry name" value="PRK00767.1"/>
    <property type="match status" value="1"/>
</dbReference>
<dbReference type="PANTHER" id="PTHR30055:SF234">
    <property type="entry name" value="HTH-TYPE TRANSCRIPTIONAL REGULATOR BETI"/>
    <property type="match status" value="1"/>
</dbReference>
<dbReference type="PANTHER" id="PTHR30055">
    <property type="entry name" value="HTH-TYPE TRANSCRIPTIONAL REGULATOR RUTR"/>
    <property type="match status" value="1"/>
</dbReference>
<dbReference type="Pfam" id="PF13977">
    <property type="entry name" value="TetR_C_6"/>
    <property type="match status" value="1"/>
</dbReference>
<dbReference type="Pfam" id="PF00440">
    <property type="entry name" value="TetR_N"/>
    <property type="match status" value="1"/>
</dbReference>
<dbReference type="SUPFAM" id="SSF46689">
    <property type="entry name" value="Homeodomain-like"/>
    <property type="match status" value="1"/>
</dbReference>
<dbReference type="SUPFAM" id="SSF48498">
    <property type="entry name" value="Tetracyclin repressor-like, C-terminal domain"/>
    <property type="match status" value="1"/>
</dbReference>
<dbReference type="PROSITE" id="PS01081">
    <property type="entry name" value="HTH_TETR_1"/>
    <property type="match status" value="1"/>
</dbReference>
<dbReference type="PROSITE" id="PS50977">
    <property type="entry name" value="HTH_TETR_2"/>
    <property type="match status" value="1"/>
</dbReference>
<name>BETI_PSESM</name>